<keyword id="KW-1185">Reference proteome</keyword>
<keyword id="KW-0687">Ribonucleoprotein</keyword>
<keyword id="KW-0689">Ribosomal protein</keyword>
<keyword id="KW-0694">RNA-binding</keyword>
<keyword id="KW-0699">rRNA-binding</keyword>
<organism>
    <name type="scientific">Chlorobium luteolum (strain DSM 273 / BCRC 81028 / 2530)</name>
    <name type="common">Pelodictyon luteolum</name>
    <dbReference type="NCBI Taxonomy" id="319225"/>
    <lineage>
        <taxon>Bacteria</taxon>
        <taxon>Pseudomonadati</taxon>
        <taxon>Chlorobiota</taxon>
        <taxon>Chlorobiia</taxon>
        <taxon>Chlorobiales</taxon>
        <taxon>Chlorobiaceae</taxon>
        <taxon>Chlorobium/Pelodictyon group</taxon>
        <taxon>Pelodictyon</taxon>
    </lineage>
</organism>
<proteinExistence type="inferred from homology"/>
<sequence length="203" mass="23194">MARFRGSITKVSRRLGVALSPKAEKYLERRPFAPGQHGQGRRGKISEYALQLREKQKMKYLYGILEKQFRNYYKKAVSQRGVTGDNLVKLIERRLDNVVFRAGFAPSRAGARQLVSHSHLLVNGRKVNIPSFLVSPGDLIEFRQKSRNMDAVTDALNRAPDARIPAWIQVDKANQKAVFLSVPERVDIQEPYNEQLVVELYSK</sequence>
<gene>
    <name evidence="1" type="primary">rpsD</name>
    <name type="ordered locus">Plut_0206</name>
</gene>
<dbReference type="EMBL" id="CP000096">
    <property type="protein sequence ID" value="ABB23094.1"/>
    <property type="molecule type" value="Genomic_DNA"/>
</dbReference>
<dbReference type="RefSeq" id="WP_011356969.1">
    <property type="nucleotide sequence ID" value="NC_007512.1"/>
</dbReference>
<dbReference type="SMR" id="Q3B6D7"/>
<dbReference type="STRING" id="319225.Plut_0206"/>
<dbReference type="KEGG" id="plt:Plut_0206"/>
<dbReference type="eggNOG" id="COG0522">
    <property type="taxonomic scope" value="Bacteria"/>
</dbReference>
<dbReference type="HOGENOM" id="CLU_092403_0_2_10"/>
<dbReference type="OrthoDB" id="9803672at2"/>
<dbReference type="Proteomes" id="UP000002709">
    <property type="component" value="Chromosome"/>
</dbReference>
<dbReference type="GO" id="GO:0015935">
    <property type="term" value="C:small ribosomal subunit"/>
    <property type="evidence" value="ECO:0007669"/>
    <property type="project" value="InterPro"/>
</dbReference>
<dbReference type="GO" id="GO:0019843">
    <property type="term" value="F:rRNA binding"/>
    <property type="evidence" value="ECO:0007669"/>
    <property type="project" value="UniProtKB-UniRule"/>
</dbReference>
<dbReference type="GO" id="GO:0003735">
    <property type="term" value="F:structural constituent of ribosome"/>
    <property type="evidence" value="ECO:0007669"/>
    <property type="project" value="InterPro"/>
</dbReference>
<dbReference type="GO" id="GO:0042274">
    <property type="term" value="P:ribosomal small subunit biogenesis"/>
    <property type="evidence" value="ECO:0007669"/>
    <property type="project" value="TreeGrafter"/>
</dbReference>
<dbReference type="GO" id="GO:0006412">
    <property type="term" value="P:translation"/>
    <property type="evidence" value="ECO:0007669"/>
    <property type="project" value="UniProtKB-UniRule"/>
</dbReference>
<dbReference type="CDD" id="cd00165">
    <property type="entry name" value="S4"/>
    <property type="match status" value="1"/>
</dbReference>
<dbReference type="FunFam" id="3.10.290.10:FF:000001">
    <property type="entry name" value="30S ribosomal protein S4"/>
    <property type="match status" value="1"/>
</dbReference>
<dbReference type="Gene3D" id="1.10.1050.10">
    <property type="entry name" value="Ribosomal Protein S4 Delta 41, Chain A, domain 1"/>
    <property type="match status" value="1"/>
</dbReference>
<dbReference type="Gene3D" id="3.10.290.10">
    <property type="entry name" value="RNA-binding S4 domain"/>
    <property type="match status" value="1"/>
</dbReference>
<dbReference type="HAMAP" id="MF_01306_B">
    <property type="entry name" value="Ribosomal_uS4_B"/>
    <property type="match status" value="1"/>
</dbReference>
<dbReference type="InterPro" id="IPR022801">
    <property type="entry name" value="Ribosomal_uS4"/>
</dbReference>
<dbReference type="InterPro" id="IPR005709">
    <property type="entry name" value="Ribosomal_uS4_bac-type"/>
</dbReference>
<dbReference type="InterPro" id="IPR018079">
    <property type="entry name" value="Ribosomal_uS4_CS"/>
</dbReference>
<dbReference type="InterPro" id="IPR001912">
    <property type="entry name" value="Ribosomal_uS4_N"/>
</dbReference>
<dbReference type="InterPro" id="IPR002942">
    <property type="entry name" value="S4_RNA-bd"/>
</dbReference>
<dbReference type="InterPro" id="IPR036986">
    <property type="entry name" value="S4_RNA-bd_sf"/>
</dbReference>
<dbReference type="NCBIfam" id="NF003717">
    <property type="entry name" value="PRK05327.1"/>
    <property type="match status" value="1"/>
</dbReference>
<dbReference type="NCBIfam" id="TIGR01017">
    <property type="entry name" value="rpsD_bact"/>
    <property type="match status" value="1"/>
</dbReference>
<dbReference type="PANTHER" id="PTHR11831">
    <property type="entry name" value="30S 40S RIBOSOMAL PROTEIN"/>
    <property type="match status" value="1"/>
</dbReference>
<dbReference type="PANTHER" id="PTHR11831:SF4">
    <property type="entry name" value="SMALL RIBOSOMAL SUBUNIT PROTEIN US4M"/>
    <property type="match status" value="1"/>
</dbReference>
<dbReference type="Pfam" id="PF00163">
    <property type="entry name" value="Ribosomal_S4"/>
    <property type="match status" value="1"/>
</dbReference>
<dbReference type="Pfam" id="PF01479">
    <property type="entry name" value="S4"/>
    <property type="match status" value="1"/>
</dbReference>
<dbReference type="SMART" id="SM01390">
    <property type="entry name" value="Ribosomal_S4"/>
    <property type="match status" value="1"/>
</dbReference>
<dbReference type="SMART" id="SM00363">
    <property type="entry name" value="S4"/>
    <property type="match status" value="1"/>
</dbReference>
<dbReference type="SUPFAM" id="SSF55174">
    <property type="entry name" value="Alpha-L RNA-binding motif"/>
    <property type="match status" value="1"/>
</dbReference>
<dbReference type="PROSITE" id="PS00632">
    <property type="entry name" value="RIBOSOMAL_S4"/>
    <property type="match status" value="1"/>
</dbReference>
<dbReference type="PROSITE" id="PS50889">
    <property type="entry name" value="S4"/>
    <property type="match status" value="1"/>
</dbReference>
<name>RS4_CHLL3</name>
<accession>Q3B6D7</accession>
<protein>
    <recommendedName>
        <fullName evidence="1">Small ribosomal subunit protein uS4</fullName>
    </recommendedName>
    <alternativeName>
        <fullName evidence="2">30S ribosomal protein S4</fullName>
    </alternativeName>
</protein>
<comment type="function">
    <text evidence="1">One of the primary rRNA binding proteins, it binds directly to 16S rRNA where it nucleates assembly of the body of the 30S subunit.</text>
</comment>
<comment type="function">
    <text evidence="1">With S5 and S12 plays an important role in translational accuracy.</text>
</comment>
<comment type="subunit">
    <text evidence="1">Part of the 30S ribosomal subunit. Contacts protein S5. The interaction surface between S4 and S5 is involved in control of translational fidelity.</text>
</comment>
<comment type="similarity">
    <text evidence="1">Belongs to the universal ribosomal protein uS4 family.</text>
</comment>
<feature type="chain" id="PRO_0000228910" description="Small ribosomal subunit protein uS4">
    <location>
        <begin position="1"/>
        <end position="203"/>
    </location>
</feature>
<feature type="domain" description="S4 RNA-binding" evidence="1">
    <location>
        <begin position="93"/>
        <end position="154"/>
    </location>
</feature>
<reference key="1">
    <citation type="submission" date="2005-08" db="EMBL/GenBank/DDBJ databases">
        <title>Complete sequence of Pelodictyon luteolum DSM 273.</title>
        <authorList>
            <consortium name="US DOE Joint Genome Institute"/>
            <person name="Copeland A."/>
            <person name="Lucas S."/>
            <person name="Lapidus A."/>
            <person name="Barry K."/>
            <person name="Detter J.C."/>
            <person name="Glavina T."/>
            <person name="Hammon N."/>
            <person name="Israni S."/>
            <person name="Pitluck S."/>
            <person name="Bryant D."/>
            <person name="Schmutz J."/>
            <person name="Larimer F."/>
            <person name="Land M."/>
            <person name="Kyrpides N."/>
            <person name="Ivanova N."/>
            <person name="Richardson P."/>
        </authorList>
    </citation>
    <scope>NUCLEOTIDE SEQUENCE [LARGE SCALE GENOMIC DNA]</scope>
    <source>
        <strain>DSM 273 / BCRC 81028 / 2530</strain>
    </source>
</reference>
<evidence type="ECO:0000255" key="1">
    <source>
        <dbReference type="HAMAP-Rule" id="MF_01306"/>
    </source>
</evidence>
<evidence type="ECO:0000305" key="2"/>